<gene>
    <name evidence="1" type="primary">murB</name>
    <name type="ordered locus">SPG_1329</name>
</gene>
<name>MURB_STRP4</name>
<reference key="1">
    <citation type="journal article" date="2001" name="Microb. Drug Resist.">
        <title>Annotated draft genomic sequence from a Streptococcus pneumoniae type 19F clinical isolate.</title>
        <authorList>
            <person name="Dopazo J."/>
            <person name="Mendoza A."/>
            <person name="Herrero J."/>
            <person name="Caldara F."/>
            <person name="Humbert Y."/>
            <person name="Friedli L."/>
            <person name="Guerrier M."/>
            <person name="Grand-Schenk E."/>
            <person name="Gandin C."/>
            <person name="de Francesco M."/>
            <person name="Polissi A."/>
            <person name="Buell G."/>
            <person name="Feger G."/>
            <person name="Garcia E."/>
            <person name="Peitsch M."/>
            <person name="Garcia-Bustos J.F."/>
        </authorList>
    </citation>
    <scope>NUCLEOTIDE SEQUENCE [LARGE SCALE GENOMIC DNA]</scope>
    <source>
        <strain>G54</strain>
    </source>
</reference>
<reference key="2">
    <citation type="submission" date="2008-03" db="EMBL/GenBank/DDBJ databases">
        <title>Pneumococcal beta glucoside metabolism investigated by whole genome comparison.</title>
        <authorList>
            <person name="Mulas L."/>
            <person name="Trappetti C."/>
            <person name="Hakenbeck R."/>
            <person name="Iannelli F."/>
            <person name="Pozzi G."/>
            <person name="Davidsen T.M."/>
            <person name="Tettelin H."/>
            <person name="Oggioni M."/>
        </authorList>
    </citation>
    <scope>NUCLEOTIDE SEQUENCE [LARGE SCALE GENOMIC DNA]</scope>
    <source>
        <strain>G54</strain>
    </source>
</reference>
<accession>B5E5P6</accession>
<keyword id="KW-0131">Cell cycle</keyword>
<keyword id="KW-0132">Cell division</keyword>
<keyword id="KW-0133">Cell shape</keyword>
<keyword id="KW-0961">Cell wall biogenesis/degradation</keyword>
<keyword id="KW-0963">Cytoplasm</keyword>
<keyword id="KW-0274">FAD</keyword>
<keyword id="KW-0285">Flavoprotein</keyword>
<keyword id="KW-0521">NADP</keyword>
<keyword id="KW-0560">Oxidoreductase</keyword>
<keyword id="KW-0573">Peptidoglycan synthesis</keyword>
<comment type="function">
    <text evidence="1">Cell wall formation.</text>
</comment>
<comment type="catalytic activity">
    <reaction evidence="1">
        <text>UDP-N-acetyl-alpha-D-muramate + NADP(+) = UDP-N-acetyl-3-O-(1-carboxyvinyl)-alpha-D-glucosamine + NADPH + H(+)</text>
        <dbReference type="Rhea" id="RHEA:12248"/>
        <dbReference type="ChEBI" id="CHEBI:15378"/>
        <dbReference type="ChEBI" id="CHEBI:57783"/>
        <dbReference type="ChEBI" id="CHEBI:58349"/>
        <dbReference type="ChEBI" id="CHEBI:68483"/>
        <dbReference type="ChEBI" id="CHEBI:70757"/>
        <dbReference type="EC" id="1.3.1.98"/>
    </reaction>
</comment>
<comment type="cofactor">
    <cofactor evidence="1">
        <name>FAD</name>
        <dbReference type="ChEBI" id="CHEBI:57692"/>
    </cofactor>
</comment>
<comment type="pathway">
    <text evidence="1">Cell wall biogenesis; peptidoglycan biosynthesis.</text>
</comment>
<comment type="subcellular location">
    <subcellularLocation>
        <location evidence="1">Cytoplasm</location>
    </subcellularLocation>
</comment>
<comment type="similarity">
    <text evidence="1">Belongs to the MurB family.</text>
</comment>
<feature type="chain" id="PRO_1000117138" description="UDP-N-acetylenolpyruvoylglucosamine reductase">
    <location>
        <begin position="1"/>
        <end position="316"/>
    </location>
</feature>
<feature type="domain" description="FAD-binding PCMH-type" evidence="1">
    <location>
        <begin position="30"/>
        <end position="194"/>
    </location>
</feature>
<feature type="active site" evidence="1">
    <location>
        <position position="173"/>
    </location>
</feature>
<feature type="active site" description="Proton donor" evidence="1">
    <location>
        <position position="223"/>
    </location>
</feature>
<feature type="active site" evidence="1">
    <location>
        <position position="293"/>
    </location>
</feature>
<dbReference type="EC" id="1.3.1.98" evidence="1"/>
<dbReference type="EMBL" id="CP001015">
    <property type="protein sequence ID" value="ACF56274.1"/>
    <property type="molecule type" value="Genomic_DNA"/>
</dbReference>
<dbReference type="KEGG" id="spx:SPG_1329"/>
<dbReference type="HOGENOM" id="CLU_035304_1_1_9"/>
<dbReference type="UniPathway" id="UPA00219"/>
<dbReference type="GO" id="GO:0005829">
    <property type="term" value="C:cytosol"/>
    <property type="evidence" value="ECO:0007669"/>
    <property type="project" value="TreeGrafter"/>
</dbReference>
<dbReference type="GO" id="GO:0071949">
    <property type="term" value="F:FAD binding"/>
    <property type="evidence" value="ECO:0007669"/>
    <property type="project" value="InterPro"/>
</dbReference>
<dbReference type="GO" id="GO:0008762">
    <property type="term" value="F:UDP-N-acetylmuramate dehydrogenase activity"/>
    <property type="evidence" value="ECO:0007669"/>
    <property type="project" value="UniProtKB-UniRule"/>
</dbReference>
<dbReference type="GO" id="GO:0051301">
    <property type="term" value="P:cell division"/>
    <property type="evidence" value="ECO:0007669"/>
    <property type="project" value="UniProtKB-KW"/>
</dbReference>
<dbReference type="GO" id="GO:0071555">
    <property type="term" value="P:cell wall organization"/>
    <property type="evidence" value="ECO:0007669"/>
    <property type="project" value="UniProtKB-KW"/>
</dbReference>
<dbReference type="GO" id="GO:0009252">
    <property type="term" value="P:peptidoglycan biosynthetic process"/>
    <property type="evidence" value="ECO:0007669"/>
    <property type="project" value="UniProtKB-UniRule"/>
</dbReference>
<dbReference type="GO" id="GO:0008360">
    <property type="term" value="P:regulation of cell shape"/>
    <property type="evidence" value="ECO:0007669"/>
    <property type="project" value="UniProtKB-KW"/>
</dbReference>
<dbReference type="Gene3D" id="3.30.465.10">
    <property type="match status" value="1"/>
</dbReference>
<dbReference type="Gene3D" id="3.90.78.10">
    <property type="entry name" value="UDP-N-acetylenolpyruvoylglucosamine reductase, C-terminal domain"/>
    <property type="match status" value="1"/>
</dbReference>
<dbReference type="Gene3D" id="3.30.43.10">
    <property type="entry name" value="Uridine Diphospho-n-acetylenolpyruvylglucosamine Reductase, domain 2"/>
    <property type="match status" value="1"/>
</dbReference>
<dbReference type="HAMAP" id="MF_00037">
    <property type="entry name" value="MurB"/>
    <property type="match status" value="1"/>
</dbReference>
<dbReference type="InterPro" id="IPR016166">
    <property type="entry name" value="FAD-bd_PCMH"/>
</dbReference>
<dbReference type="InterPro" id="IPR036318">
    <property type="entry name" value="FAD-bd_PCMH-like_sf"/>
</dbReference>
<dbReference type="InterPro" id="IPR016167">
    <property type="entry name" value="FAD-bd_PCMH_sub1"/>
</dbReference>
<dbReference type="InterPro" id="IPR016169">
    <property type="entry name" value="FAD-bd_PCMH_sub2"/>
</dbReference>
<dbReference type="InterPro" id="IPR003170">
    <property type="entry name" value="MurB"/>
</dbReference>
<dbReference type="InterPro" id="IPR011601">
    <property type="entry name" value="MurB_C"/>
</dbReference>
<dbReference type="InterPro" id="IPR036635">
    <property type="entry name" value="MurB_C_sf"/>
</dbReference>
<dbReference type="InterPro" id="IPR006094">
    <property type="entry name" value="Oxid_FAD_bind_N"/>
</dbReference>
<dbReference type="NCBIfam" id="TIGR00179">
    <property type="entry name" value="murB"/>
    <property type="match status" value="1"/>
</dbReference>
<dbReference type="NCBIfam" id="NF010480">
    <property type="entry name" value="PRK13905.1"/>
    <property type="match status" value="1"/>
</dbReference>
<dbReference type="PANTHER" id="PTHR21071">
    <property type="entry name" value="UDP-N-ACETYLENOLPYRUVOYLGLUCOSAMINE REDUCTASE"/>
    <property type="match status" value="1"/>
</dbReference>
<dbReference type="PANTHER" id="PTHR21071:SF4">
    <property type="entry name" value="UDP-N-ACETYLENOLPYRUVOYLGLUCOSAMINE REDUCTASE"/>
    <property type="match status" value="1"/>
</dbReference>
<dbReference type="Pfam" id="PF01565">
    <property type="entry name" value="FAD_binding_4"/>
    <property type="match status" value="1"/>
</dbReference>
<dbReference type="Pfam" id="PF02873">
    <property type="entry name" value="MurB_C"/>
    <property type="match status" value="1"/>
</dbReference>
<dbReference type="SUPFAM" id="SSF56176">
    <property type="entry name" value="FAD-binding/transporter-associated domain-like"/>
    <property type="match status" value="1"/>
</dbReference>
<dbReference type="SUPFAM" id="SSF56194">
    <property type="entry name" value="Uridine diphospho-N-Acetylenolpyruvylglucosamine reductase, MurB, C-terminal domain"/>
    <property type="match status" value="1"/>
</dbReference>
<dbReference type="PROSITE" id="PS51387">
    <property type="entry name" value="FAD_PCMH"/>
    <property type="match status" value="1"/>
</dbReference>
<proteinExistence type="inferred from homology"/>
<sequence>MSVREKMLEILEGIDIRFQEPXHSYSYTKVGGEADYLVFPRNRFELARVVKFANQENIPWMVLGNASNIIVRDGGIRGFVILCDKLNNVSVDGYTIEAEAGANLIETTRIALRHSLTGFEFACGIPGSVGGAVFMNAGAYGGEIAHILQSCKVLTKDGEIETLSAKDLAFGYRHSAIQESGAVVLSVKFALAPGTHQVIKQEMDRLTHLRELKQPLEYPSCGSXFKRPVGHFAXQLISEXGLKGYRIGGVEVSEKHAGFMINVADGTAKDYEDLIQSVIEKVKEHSGITLEREVRILGESLSVAKMYAGGFTPCKR</sequence>
<protein>
    <recommendedName>
        <fullName evidence="1">UDP-N-acetylenolpyruvoylglucosamine reductase</fullName>
        <ecNumber evidence="1">1.3.1.98</ecNumber>
    </recommendedName>
    <alternativeName>
        <fullName evidence="1">UDP-N-acetylmuramate dehydrogenase</fullName>
    </alternativeName>
</protein>
<evidence type="ECO:0000255" key="1">
    <source>
        <dbReference type="HAMAP-Rule" id="MF_00037"/>
    </source>
</evidence>
<organism>
    <name type="scientific">Streptococcus pneumoniae serotype 19F (strain G54)</name>
    <dbReference type="NCBI Taxonomy" id="512566"/>
    <lineage>
        <taxon>Bacteria</taxon>
        <taxon>Bacillati</taxon>
        <taxon>Bacillota</taxon>
        <taxon>Bacilli</taxon>
        <taxon>Lactobacillales</taxon>
        <taxon>Streptococcaceae</taxon>
        <taxon>Streptococcus</taxon>
    </lineage>
</organism>